<proteinExistence type="evidence at protein level"/>
<gene>
    <name evidence="9" type="primary">sult6b1</name>
</gene>
<dbReference type="EC" id="2.8.2.-" evidence="4"/>
<dbReference type="EC" id="2.8.2.n2" evidence="4"/>
<dbReference type="EMBL" id="AY180110">
    <property type="protein sequence ID" value="AAO49010.1"/>
    <property type="molecule type" value="mRNA"/>
</dbReference>
<dbReference type="EMBL" id="CU929458">
    <property type="status" value="NOT_ANNOTATED_CDS"/>
    <property type="molecule type" value="Genomic_DNA"/>
</dbReference>
<dbReference type="EMBL" id="BC093112">
    <property type="protein sequence ID" value="AAH93112.1"/>
    <property type="status" value="ALT_SEQ"/>
    <property type="molecule type" value="mRNA"/>
</dbReference>
<dbReference type="RefSeq" id="NP_999851.2">
    <property type="nucleotide sequence ID" value="NM_214686.2"/>
</dbReference>
<dbReference type="SMR" id="F1QYJ6"/>
<dbReference type="STRING" id="7955.ENSDARP00000105990"/>
<dbReference type="PaxDb" id="7955-ENSDARP00000105990"/>
<dbReference type="Ensembl" id="ENSDART00000130131">
    <property type="protein sequence ID" value="ENSDARP00000105990"/>
    <property type="gene ID" value="ENSDARG00000086826"/>
</dbReference>
<dbReference type="GeneID" id="322462"/>
<dbReference type="KEGG" id="dre:322462"/>
<dbReference type="AGR" id="ZFIN:ZDB-GENE-050417-228"/>
<dbReference type="CTD" id="391365"/>
<dbReference type="ZFIN" id="ZDB-GENE-050417-228">
    <property type="gene designation" value="sult6b1"/>
</dbReference>
<dbReference type="eggNOG" id="KOG1584">
    <property type="taxonomic scope" value="Eukaryota"/>
</dbReference>
<dbReference type="HOGENOM" id="CLU_027239_1_2_1"/>
<dbReference type="InParanoid" id="F1QYJ6"/>
<dbReference type="OMA" id="PPIIEFY"/>
<dbReference type="OrthoDB" id="205623at2759"/>
<dbReference type="PhylomeDB" id="F1QYJ6"/>
<dbReference type="TreeFam" id="TF321745"/>
<dbReference type="Reactome" id="R-DRE-156584">
    <property type="pathway name" value="Cytosolic sulfonation of small molecules"/>
</dbReference>
<dbReference type="PRO" id="PR:F1QYJ6"/>
<dbReference type="Proteomes" id="UP000000437">
    <property type="component" value="Chromosome 11"/>
</dbReference>
<dbReference type="Bgee" id="ENSDARG00000086826">
    <property type="expression patterns" value="Expressed in gastrula and 40 other cell types or tissues"/>
</dbReference>
<dbReference type="GO" id="GO:0005737">
    <property type="term" value="C:cytoplasm"/>
    <property type="evidence" value="ECO:0000318"/>
    <property type="project" value="GO_Central"/>
</dbReference>
<dbReference type="GO" id="GO:0005829">
    <property type="term" value="C:cytosol"/>
    <property type="evidence" value="ECO:0007669"/>
    <property type="project" value="UniProtKB-SubCell"/>
</dbReference>
<dbReference type="GO" id="GO:0008146">
    <property type="term" value="F:sulfotransferase activity"/>
    <property type="evidence" value="ECO:0000314"/>
    <property type="project" value="ZFIN"/>
</dbReference>
<dbReference type="GO" id="GO:0071466">
    <property type="term" value="P:cellular response to xenobiotic stimulus"/>
    <property type="evidence" value="ECO:0000314"/>
    <property type="project" value="ZFIN"/>
</dbReference>
<dbReference type="GO" id="GO:0051923">
    <property type="term" value="P:sulfation"/>
    <property type="evidence" value="ECO:0000318"/>
    <property type="project" value="GO_Central"/>
</dbReference>
<dbReference type="FunFam" id="3.40.50.300:FF:002302">
    <property type="entry name" value="Sulfotransferase"/>
    <property type="match status" value="1"/>
</dbReference>
<dbReference type="Gene3D" id="3.40.50.300">
    <property type="entry name" value="P-loop containing nucleotide triphosphate hydrolases"/>
    <property type="match status" value="1"/>
</dbReference>
<dbReference type="InterPro" id="IPR027417">
    <property type="entry name" value="P-loop_NTPase"/>
</dbReference>
<dbReference type="InterPro" id="IPR000863">
    <property type="entry name" value="Sulfotransferase_dom"/>
</dbReference>
<dbReference type="PANTHER" id="PTHR11783">
    <property type="entry name" value="SULFOTRANSFERASE SULT"/>
    <property type="match status" value="1"/>
</dbReference>
<dbReference type="Pfam" id="PF00685">
    <property type="entry name" value="Sulfotransfer_1"/>
    <property type="match status" value="1"/>
</dbReference>
<dbReference type="SUPFAM" id="SSF52540">
    <property type="entry name" value="P-loop containing nucleoside triphosphate hydrolases"/>
    <property type="match status" value="1"/>
</dbReference>
<reference evidence="7" key="1">
    <citation type="journal article" date="2003" name="Biochem. Biophys. Res. Commun.">
        <title>Molecular cloning, expression, and functional characterization of a novel zebrafish cytosolic sulfotransferase.</title>
        <authorList>
            <person name="Sugahara T."/>
            <person name="Liu C.C."/>
            <person name="Govind Pai T."/>
            <person name="Liu M.C."/>
        </authorList>
    </citation>
    <scope>NUCLEOTIDE SEQUENCE [MRNA]</scope>
    <scope>FUNCTION</scope>
    <scope>CATALYTIC ACTIVITY</scope>
    <scope>ACTIVITY REGULATION</scope>
    <scope>BIOPHYSICOCHEMICAL PROPERTIES</scope>
</reference>
<reference evidence="8" key="2">
    <citation type="journal article" date="2013" name="Nature">
        <title>The zebrafish reference genome sequence and its relationship to the human genome.</title>
        <authorList>
            <person name="Howe K."/>
            <person name="Clark M.D."/>
            <person name="Torroja C.F."/>
            <person name="Torrance J."/>
            <person name="Berthelot C."/>
            <person name="Muffato M."/>
            <person name="Collins J.E."/>
            <person name="Humphray S."/>
            <person name="McLaren K."/>
            <person name="Matthews L."/>
            <person name="McLaren S."/>
            <person name="Sealy I."/>
            <person name="Caccamo M."/>
            <person name="Churcher C."/>
            <person name="Scott C."/>
            <person name="Barrett J.C."/>
            <person name="Koch R."/>
            <person name="Rauch G.J."/>
            <person name="White S."/>
            <person name="Chow W."/>
            <person name="Kilian B."/>
            <person name="Quintais L.T."/>
            <person name="Guerra-Assuncao J.A."/>
            <person name="Zhou Y."/>
            <person name="Gu Y."/>
            <person name="Yen J."/>
            <person name="Vogel J.H."/>
            <person name="Eyre T."/>
            <person name="Redmond S."/>
            <person name="Banerjee R."/>
            <person name="Chi J."/>
            <person name="Fu B."/>
            <person name="Langley E."/>
            <person name="Maguire S.F."/>
            <person name="Laird G.K."/>
            <person name="Lloyd D."/>
            <person name="Kenyon E."/>
            <person name="Donaldson S."/>
            <person name="Sehra H."/>
            <person name="Almeida-King J."/>
            <person name="Loveland J."/>
            <person name="Trevanion S."/>
            <person name="Jones M."/>
            <person name="Quail M."/>
            <person name="Willey D."/>
            <person name="Hunt A."/>
            <person name="Burton J."/>
            <person name="Sims S."/>
            <person name="McLay K."/>
            <person name="Plumb B."/>
            <person name="Davis J."/>
            <person name="Clee C."/>
            <person name="Oliver K."/>
            <person name="Clark R."/>
            <person name="Riddle C."/>
            <person name="Elliot D."/>
            <person name="Threadgold G."/>
            <person name="Harden G."/>
            <person name="Ware D."/>
            <person name="Begum S."/>
            <person name="Mortimore B."/>
            <person name="Kerry G."/>
            <person name="Heath P."/>
            <person name="Phillimore B."/>
            <person name="Tracey A."/>
            <person name="Corby N."/>
            <person name="Dunn M."/>
            <person name="Johnson C."/>
            <person name="Wood J."/>
            <person name="Clark S."/>
            <person name="Pelan S."/>
            <person name="Griffiths G."/>
            <person name="Smith M."/>
            <person name="Glithero R."/>
            <person name="Howden P."/>
            <person name="Barker N."/>
            <person name="Lloyd C."/>
            <person name="Stevens C."/>
            <person name="Harley J."/>
            <person name="Holt K."/>
            <person name="Panagiotidis G."/>
            <person name="Lovell J."/>
            <person name="Beasley H."/>
            <person name="Henderson C."/>
            <person name="Gordon D."/>
            <person name="Auger K."/>
            <person name="Wright D."/>
            <person name="Collins J."/>
            <person name="Raisen C."/>
            <person name="Dyer L."/>
            <person name="Leung K."/>
            <person name="Robertson L."/>
            <person name="Ambridge K."/>
            <person name="Leongamornlert D."/>
            <person name="McGuire S."/>
            <person name="Gilderthorp R."/>
            <person name="Griffiths C."/>
            <person name="Manthravadi D."/>
            <person name="Nichol S."/>
            <person name="Barker G."/>
            <person name="Whitehead S."/>
            <person name="Kay M."/>
            <person name="Brown J."/>
            <person name="Murnane C."/>
            <person name="Gray E."/>
            <person name="Humphries M."/>
            <person name="Sycamore N."/>
            <person name="Barker D."/>
            <person name="Saunders D."/>
            <person name="Wallis J."/>
            <person name="Babbage A."/>
            <person name="Hammond S."/>
            <person name="Mashreghi-Mohammadi M."/>
            <person name="Barr L."/>
            <person name="Martin S."/>
            <person name="Wray P."/>
            <person name="Ellington A."/>
            <person name="Matthews N."/>
            <person name="Ellwood M."/>
            <person name="Woodmansey R."/>
            <person name="Clark G."/>
            <person name="Cooper J."/>
            <person name="Tromans A."/>
            <person name="Grafham D."/>
            <person name="Skuce C."/>
            <person name="Pandian R."/>
            <person name="Andrews R."/>
            <person name="Harrison E."/>
            <person name="Kimberley A."/>
            <person name="Garnett J."/>
            <person name="Fosker N."/>
            <person name="Hall R."/>
            <person name="Garner P."/>
            <person name="Kelly D."/>
            <person name="Bird C."/>
            <person name="Palmer S."/>
            <person name="Gehring I."/>
            <person name="Berger A."/>
            <person name="Dooley C.M."/>
            <person name="Ersan-Urun Z."/>
            <person name="Eser C."/>
            <person name="Geiger H."/>
            <person name="Geisler M."/>
            <person name="Karotki L."/>
            <person name="Kirn A."/>
            <person name="Konantz J."/>
            <person name="Konantz M."/>
            <person name="Oberlander M."/>
            <person name="Rudolph-Geiger S."/>
            <person name="Teucke M."/>
            <person name="Lanz C."/>
            <person name="Raddatz G."/>
            <person name="Osoegawa K."/>
            <person name="Zhu B."/>
            <person name="Rapp A."/>
            <person name="Widaa S."/>
            <person name="Langford C."/>
            <person name="Yang F."/>
            <person name="Schuster S.C."/>
            <person name="Carter N.P."/>
            <person name="Harrow J."/>
            <person name="Ning Z."/>
            <person name="Herrero J."/>
            <person name="Searle S.M."/>
            <person name="Enright A."/>
            <person name="Geisler R."/>
            <person name="Plasterk R.H."/>
            <person name="Lee C."/>
            <person name="Westerfield M."/>
            <person name="de Jong P.J."/>
            <person name="Zon L.I."/>
            <person name="Postlethwait J.H."/>
            <person name="Nusslein-Volhard C."/>
            <person name="Hubbard T.J."/>
            <person name="Roest Crollius H."/>
            <person name="Rogers J."/>
            <person name="Stemple D.L."/>
        </authorList>
    </citation>
    <scope>NUCLEOTIDE SEQUENCE [LARGE SCALE GENOMIC DNA]</scope>
    <source>
        <strain>Tuebingen</strain>
    </source>
</reference>
<reference evidence="6" key="3">
    <citation type="submission" date="2005-04" db="EMBL/GenBank/DDBJ databases">
        <authorList>
            <consortium name="NIH - Zebrafish Gene Collection (ZGC) project"/>
        </authorList>
    </citation>
    <scope>NUCLEOTIDE SEQUENCE [LARGE SCALE MRNA] OF 1-259</scope>
    <source>
        <tissue evidence="6">Larva</tissue>
    </source>
</reference>
<organism evidence="8">
    <name type="scientific">Danio rerio</name>
    <name type="common">Zebrafish</name>
    <name type="synonym">Brachydanio rerio</name>
    <dbReference type="NCBI Taxonomy" id="7955"/>
    <lineage>
        <taxon>Eukaryota</taxon>
        <taxon>Metazoa</taxon>
        <taxon>Chordata</taxon>
        <taxon>Craniata</taxon>
        <taxon>Vertebrata</taxon>
        <taxon>Euteleostomi</taxon>
        <taxon>Actinopterygii</taxon>
        <taxon>Neopterygii</taxon>
        <taxon>Teleostei</taxon>
        <taxon>Ostariophysi</taxon>
        <taxon>Cypriniformes</taxon>
        <taxon>Danionidae</taxon>
        <taxon>Danioninae</taxon>
        <taxon>Danio</taxon>
    </lineage>
</organism>
<evidence type="ECO:0000250" key="1">
    <source>
        <dbReference type="UniProtKB" id="P0CC03"/>
    </source>
</evidence>
<evidence type="ECO:0000250" key="2">
    <source>
        <dbReference type="UniProtKB" id="P49891"/>
    </source>
</evidence>
<evidence type="ECO:0000255" key="3">
    <source>
        <dbReference type="RuleBase" id="RU361155"/>
    </source>
</evidence>
<evidence type="ECO:0000269" key="4">
    <source>
    </source>
</evidence>
<evidence type="ECO:0000305" key="5"/>
<evidence type="ECO:0000312" key="6">
    <source>
        <dbReference type="EMBL" id="AAH93112.1"/>
    </source>
</evidence>
<evidence type="ECO:0000312" key="7">
    <source>
        <dbReference type="EMBL" id="AAO49010.1"/>
    </source>
</evidence>
<evidence type="ECO:0000312" key="8">
    <source>
        <dbReference type="Proteomes" id="UP000000437"/>
    </source>
</evidence>
<evidence type="ECO:0000312" key="9">
    <source>
        <dbReference type="ZFIN" id="ZDB-GENE-050417-228"/>
    </source>
</evidence>
<protein>
    <recommendedName>
        <fullName evidence="5">Sulfotransferase 6B1</fullName>
        <ecNumber evidence="4">2.8.2.-</ecNumber>
    </recommendedName>
    <alternativeName>
        <fullName>Thyroxine sulfotransferase</fullName>
        <ecNumber evidence="4">2.8.2.n2</ecNumber>
    </alternativeName>
</protein>
<comment type="function">
    <text evidence="4">Sulfotransferase that utilizes 3'-phospho-5'-adenylyl sulfate (PAPS) as sulfonate donor to catalyze the sulfate conjugation of a variety of xenobiotic and endogenous compounds, including dopamine, T3 (triiodo-L-thyronine), T4 (thyroxine), flavonoids, isoflavonoids, and other phenolic compounds.</text>
</comment>
<comment type="catalytic activity">
    <reaction>
        <text>thyroxine + 3'-phosphoadenylyl sulfate = thyroxine sulfate + adenosine 3',5'-bisphosphate + H(+)</text>
        <dbReference type="Rhea" id="RHEA:26422"/>
        <dbReference type="ChEBI" id="CHEBI:15378"/>
        <dbReference type="ChEBI" id="CHEBI:58339"/>
        <dbReference type="ChEBI" id="CHEBI:58343"/>
        <dbReference type="ChEBI" id="CHEBI:58910"/>
        <dbReference type="ChEBI" id="CHEBI:305790"/>
        <dbReference type="EC" id="2.8.2.n2"/>
    </reaction>
</comment>
<comment type="activity regulation">
    <text evidence="4">Strongly inhibited by the divalent metal cations Fe(2+), Hg(2+), Co(2+), Zn(2+), Cu(2+) and Cd(2+).</text>
</comment>
<comment type="biophysicochemical properties">
    <phDependence>
        <text evidence="4">Optimum pH is 7-9.</text>
    </phDependence>
    <temperatureDependence>
        <text evidence="4">Thermostable between 20-43 degrees Celsius.</text>
    </temperatureDependence>
</comment>
<comment type="subcellular location">
    <subcellularLocation>
        <location evidence="1">Cytoplasm</location>
        <location evidence="1">Cytosol</location>
    </subcellularLocation>
</comment>
<comment type="similarity">
    <text evidence="3">Belongs to the sulfotransferase 1 family.</text>
</comment>
<comment type="sequence caution" evidence="5">
    <conflict type="miscellaneous discrepancy">
        <sequence resource="EMBL-CDS" id="AAH93112"/>
    </conflict>
    <text>Chimeric cDNA. Contains sequence from chromosome 22 in the C-terminus.</text>
</comment>
<accession>F1QYJ6</accession>
<accession>Q567N1</accession>
<accession>Q800X2</accession>
<name>ST6B1_DANRE</name>
<feature type="chain" id="PRO_0000444632" description="Sulfotransferase 6B1">
    <location>
        <begin position="1"/>
        <end position="296"/>
    </location>
</feature>
<feature type="active site" description="Proton acceptor" evidence="2">
    <location>
        <position position="112"/>
    </location>
</feature>
<feature type="binding site" evidence="2">
    <location>
        <position position="134"/>
    </location>
    <ligand>
        <name>3'-phosphoadenylyl sulfate</name>
        <dbReference type="ChEBI" id="CHEBI:58339"/>
    </ligand>
</feature>
<feature type="binding site" evidence="2">
    <location>
        <position position="142"/>
    </location>
    <ligand>
        <name>3'-phosphoadenylyl sulfate</name>
        <dbReference type="ChEBI" id="CHEBI:58339"/>
    </ligand>
</feature>
<feature type="binding site" evidence="2">
    <location>
        <position position="197"/>
    </location>
    <ligand>
        <name>3'-phosphoadenylyl sulfate</name>
        <dbReference type="ChEBI" id="CHEBI:58339"/>
    </ligand>
</feature>
<feature type="binding site" evidence="2">
    <location>
        <begin position="253"/>
        <end position="255"/>
    </location>
    <ligand>
        <name>3'-phosphoadenylyl sulfate</name>
        <dbReference type="ChEBI" id="CHEBI:58339"/>
    </ligand>
</feature>
<feature type="sequence conflict" description="In Ref. 1; AAO49010." evidence="5" ref="1">
    <original>V</original>
    <variation>L</variation>
    <location>
        <position position="140"/>
    </location>
</feature>
<sequence length="296" mass="33995">MSQMKSRMETAAKMKDEDKLYRRDGILYSTVLSPPETLDKLKDLQAREDDLILVAYPKCGFNWMVAVLRKIINASTGKDEKPPERPPLVEFLPPTVQEEMAQMPPPRLLGTHLHPDNMPATFFTKKPKILVVFRNPKDTVVSYYHFMNKNPVLPNAESWDKFFSDFMTGDVSWGSYFDHALAWEKRIDDPNVMIVMYEDLKQNLPEGVKKISEFFSLPLTDEQVSSIAGQSTFSAMVENSQKSHGNFGSIFFRKGEVGDWKNHFSEAQSKQMDELYHSKLAGTKLAARMNYDLYCQ</sequence>
<keyword id="KW-0963">Cytoplasm</keyword>
<keyword id="KW-1185">Reference proteome</keyword>
<keyword id="KW-0808">Transferase</keyword>